<accession>P42659</accession>
<evidence type="ECO:0000250" key="1"/>
<evidence type="ECO:0000250" key="2">
    <source>
        <dbReference type="UniProtKB" id="P42658"/>
    </source>
</evidence>
<evidence type="ECO:0000250" key="3">
    <source>
        <dbReference type="UniProtKB" id="Q9Z218"/>
    </source>
</evidence>
<evidence type="ECO:0000255" key="4"/>
<evidence type="ECO:0000256" key="5">
    <source>
        <dbReference type="SAM" id="MobiDB-lite"/>
    </source>
</evidence>
<evidence type="ECO:0000269" key="6">
    <source>
    </source>
</evidence>
<evidence type="ECO:0000303" key="7">
    <source>
    </source>
</evidence>
<evidence type="ECO:0000305" key="8"/>
<reference key="1">
    <citation type="journal article" date="1992" name="Proc. Natl. Acad. Sci. U.S.A.">
        <title>Differential expression of two distinct forms of mRNA encoding members of a dipeptidyl aminopeptidase family.</title>
        <authorList>
            <person name="Wada K."/>
            <person name="Yokotani N."/>
            <person name="Hunter C."/>
            <person name="Doi K."/>
            <person name="Wenthold R.J."/>
            <person name="Shimasaki S."/>
        </authorList>
    </citation>
    <scope>NUCLEOTIDE SEQUENCE [MRNA] (ISOFORMS DPPX-L AND DPPX-S)</scope>
    <scope>PARTIAL PROTEIN SEQUENCE</scope>
    <scope>TISSUE SPECIFICITY</scope>
    <source>
        <tissue>Brain</tissue>
    </source>
</reference>
<keyword id="KW-0025">Alternative splicing</keyword>
<keyword id="KW-1003">Cell membrane</keyword>
<keyword id="KW-0903">Direct protein sequencing</keyword>
<keyword id="KW-1015">Disulfide bond</keyword>
<keyword id="KW-0325">Glycoprotein</keyword>
<keyword id="KW-0472">Membrane</keyword>
<keyword id="KW-1185">Reference proteome</keyword>
<keyword id="KW-0735">Signal-anchor</keyword>
<keyword id="KW-0812">Transmembrane</keyword>
<keyword id="KW-1133">Transmembrane helix</keyword>
<comment type="function">
    <text evidence="2">Regulatory subunit of Kv4/D (Shal)-type voltage-gated rapidly inactivating A-type potassium channels. Modulates the activity and gating characteristics of the potassium channel KCND2 amd KCND3. Promotes cell surface expression of the potassium channel KCND2 (By similarity). Has no dipeptidyl aminopeptidase activity (By similarity).</text>
</comment>
<comment type="subunit">
    <text evidence="2 3">Homodimer (in vitro) (By similarity). Interacts with KCND2. Identified in a complex with KCND2 and KCNIP2 (By similarity). Forms an octameric complex composed of four DPP6 subunits bound to the KCND2 tetramer (By similarity). Interacts with KCND3; this interaction modulates the channel gating kinetics namely channel activation and inactivation kinetics and rate of recovery from inactivation (By similarity).</text>
</comment>
<comment type="subcellular location">
    <subcellularLocation>
        <location evidence="2">Cell membrane</location>
        <topology evidence="2">Single-pass type II membrane protein</topology>
    </subcellularLocation>
</comment>
<comment type="alternative products">
    <event type="alternative splicing"/>
    <isoform>
        <id>P42659-1</id>
        <name>DPPX-L</name>
        <sequence type="displayed"/>
    </isoform>
    <isoform>
        <id>P42659-2</id>
        <name>DPPX-S</name>
        <sequence type="described" ref="VSP_005364"/>
    </isoform>
</comment>
<comment type="tissue specificity">
    <text evidence="6">Predominantly expressed in the brain. Isoform DPPX-L is expressed exclusively in the brain whereas isoform DPPX-S is found in brain, kidney, ovary and testis.</text>
</comment>
<comment type="PTM">
    <text evidence="2">N-glycosylated.</text>
</comment>
<comment type="similarity">
    <text evidence="8">Belongs to the peptidase S9B family.</text>
</comment>
<gene>
    <name evidence="2" type="primary">DPP6</name>
</gene>
<organism>
    <name type="scientific">Bos taurus</name>
    <name type="common">Bovine</name>
    <dbReference type="NCBI Taxonomy" id="9913"/>
    <lineage>
        <taxon>Eukaryota</taxon>
        <taxon>Metazoa</taxon>
        <taxon>Chordata</taxon>
        <taxon>Craniata</taxon>
        <taxon>Vertebrata</taxon>
        <taxon>Euteleostomi</taxon>
        <taxon>Mammalia</taxon>
        <taxon>Eutheria</taxon>
        <taxon>Laurasiatheria</taxon>
        <taxon>Artiodactyla</taxon>
        <taxon>Ruminantia</taxon>
        <taxon>Pecora</taxon>
        <taxon>Bovidae</taxon>
        <taxon>Bovinae</taxon>
        <taxon>Bos</taxon>
    </lineage>
</organism>
<feature type="chain" id="PRO_0000122408" description="A-type potassium channel modulatory protein DPP6">
    <location>
        <begin position="1"/>
        <end position="863"/>
    </location>
</feature>
<feature type="topological domain" description="Cytoplasmic" evidence="4">
    <location>
        <begin position="1"/>
        <end position="93"/>
    </location>
</feature>
<feature type="transmembrane region" description="Helical; Signal-anchor for type II membrane protein" evidence="4">
    <location>
        <begin position="94"/>
        <end position="114"/>
    </location>
</feature>
<feature type="topological domain" description="Extracellular" evidence="4">
    <location>
        <begin position="115"/>
        <end position="863"/>
    </location>
</feature>
<feature type="region of interest" description="Disordered" evidence="5">
    <location>
        <begin position="1"/>
        <end position="86"/>
    </location>
</feature>
<feature type="compositionally biased region" description="Low complexity" evidence="5">
    <location>
        <begin position="39"/>
        <end position="51"/>
    </location>
</feature>
<feature type="glycosylation site" description="N-linked (GlcNAc...) asparagine" evidence="4">
    <location>
        <position position="171"/>
    </location>
</feature>
<feature type="glycosylation site" description="N-linked (GlcNAc...) asparagine" evidence="4">
    <location>
        <position position="402"/>
    </location>
</feature>
<feature type="glycosylation site" description="N-linked (GlcNAc...) asparagine" evidence="4">
    <location>
        <position position="469"/>
    </location>
</feature>
<feature type="glycosylation site" description="N-linked (GlcNAc...) asparagine" evidence="4">
    <location>
        <position position="533"/>
    </location>
</feature>
<feature type="glycosylation site" description="N-linked (GlcNAc...) asparagine" evidence="4">
    <location>
        <position position="564"/>
    </location>
</feature>
<feature type="glycosylation site" description="N-linked (GlcNAc...) asparagine" evidence="4">
    <location>
        <position position="811"/>
    </location>
</feature>
<feature type="disulfide bond" evidence="1">
    <location>
        <begin position="409"/>
        <end position="416"/>
    </location>
</feature>
<feature type="disulfide bond" evidence="1">
    <location>
        <begin position="525"/>
        <end position="528"/>
    </location>
</feature>
<feature type="disulfide bond" evidence="1">
    <location>
        <begin position="534"/>
        <end position="552"/>
    </location>
</feature>
<feature type="disulfide bond" evidence="1">
    <location>
        <begin position="733"/>
        <end position="844"/>
    </location>
</feature>
<feature type="splice variant" id="VSP_005364" description="In isoform DPPX-S." evidence="7">
    <original>MASLYQRFTGKINTSRSFPAPPEASRLLGGQGPEEDGAGPKPLGAQAPAAAPRERGGGGGAGGRPRFQYQARSDCDDED</original>
    <variation>MTTAKEPNASGKSVQQQEQ</variation>
    <location>
        <begin position="1"/>
        <end position="79"/>
    </location>
</feature>
<name>DPP6_BOVIN</name>
<protein>
    <recommendedName>
        <fullName evidence="2">A-type potassium channel modulatory protein DPP6</fullName>
    </recommendedName>
    <alternativeName>
        <fullName>DPPX</fullName>
    </alternativeName>
    <alternativeName>
        <fullName>Dipeptidyl aminopeptidase-like protein 6</fullName>
    </alternativeName>
    <alternativeName>
        <fullName>Dipeptidyl aminopeptidase-related protein</fullName>
    </alternativeName>
    <alternativeName>
        <fullName>Dipeptidyl peptidase 6</fullName>
    </alternativeName>
    <alternativeName>
        <fullName>Dipeptidyl peptidase IV-like protein</fullName>
    </alternativeName>
    <alternativeName>
        <fullName>Dipeptidyl peptidase VI</fullName>
        <shortName>DPP VI</shortName>
    </alternativeName>
</protein>
<dbReference type="EMBL" id="M76428">
    <property type="protein sequence ID" value="AAC41622.1"/>
    <property type="molecule type" value="mRNA"/>
</dbReference>
<dbReference type="EMBL" id="M76429">
    <property type="protein sequence ID" value="AAC41623.1"/>
    <property type="molecule type" value="mRNA"/>
</dbReference>
<dbReference type="PIR" id="A41793">
    <property type="entry name" value="A41793"/>
</dbReference>
<dbReference type="PIR" id="B41793">
    <property type="entry name" value="B41793"/>
</dbReference>
<dbReference type="RefSeq" id="NP_776465.1">
    <molecule id="P42659-1"/>
    <property type="nucleotide sequence ID" value="NM_174040.2"/>
</dbReference>
<dbReference type="RefSeq" id="XP_024846211.1">
    <molecule id="P42659-2"/>
    <property type="nucleotide sequence ID" value="XM_024990443.2"/>
</dbReference>
<dbReference type="SMR" id="P42659"/>
<dbReference type="FunCoup" id="P42659">
    <property type="interactions" value="739"/>
</dbReference>
<dbReference type="STRING" id="9913.ENSBTAP00000029251"/>
<dbReference type="ESTHER" id="bovin-dpp6">
    <property type="family name" value="DPP4N_Peptidase_S9"/>
</dbReference>
<dbReference type="MEROPS" id="S09.973"/>
<dbReference type="GlyCosmos" id="P42659">
    <property type="glycosylation" value="6 sites, No reported glycans"/>
</dbReference>
<dbReference type="GlyGen" id="P42659">
    <property type="glycosylation" value="6 sites"/>
</dbReference>
<dbReference type="PaxDb" id="9913-ENSBTAP00000029251"/>
<dbReference type="Ensembl" id="ENSBTAT00000029251.7">
    <molecule id="P42659-1"/>
    <property type="protein sequence ID" value="ENSBTAP00000029251.6"/>
    <property type="gene ID" value="ENSBTAG00000021941.7"/>
</dbReference>
<dbReference type="Ensembl" id="ENSBTAT00000130751.1">
    <molecule id="P42659-2"/>
    <property type="protein sequence ID" value="ENSBTAP00000092022.1"/>
    <property type="gene ID" value="ENSBTAG00000021941.7"/>
</dbReference>
<dbReference type="GeneID" id="281123"/>
<dbReference type="KEGG" id="bta:281123"/>
<dbReference type="CTD" id="1804"/>
<dbReference type="VEuPathDB" id="HostDB:ENSBTAG00000021941"/>
<dbReference type="eggNOG" id="KOG2100">
    <property type="taxonomic scope" value="Eukaryota"/>
</dbReference>
<dbReference type="GeneTree" id="ENSGT00940000156280"/>
<dbReference type="InParanoid" id="P42659"/>
<dbReference type="OMA" id="GERYMDT"/>
<dbReference type="OrthoDB" id="16520at2759"/>
<dbReference type="Proteomes" id="UP000009136">
    <property type="component" value="Chromosome 4"/>
</dbReference>
<dbReference type="Bgee" id="ENSBTAG00000021941">
    <property type="expression patterns" value="Expressed in floor plate of diencephalon and 66 other cell types or tissues"/>
</dbReference>
<dbReference type="GO" id="GO:0005886">
    <property type="term" value="C:plasma membrane"/>
    <property type="evidence" value="ECO:0000250"/>
    <property type="project" value="UniProtKB"/>
</dbReference>
<dbReference type="GO" id="GO:0008076">
    <property type="term" value="C:voltage-gated potassium channel complex"/>
    <property type="evidence" value="ECO:0000250"/>
    <property type="project" value="UniProtKB"/>
</dbReference>
<dbReference type="GO" id="GO:0015459">
    <property type="term" value="F:potassium channel regulator activity"/>
    <property type="evidence" value="ECO:0000250"/>
    <property type="project" value="UniProtKB"/>
</dbReference>
<dbReference type="GO" id="GO:0008236">
    <property type="term" value="F:serine-type peptidase activity"/>
    <property type="evidence" value="ECO:0007669"/>
    <property type="project" value="InterPro"/>
</dbReference>
<dbReference type="GO" id="GO:0072659">
    <property type="term" value="P:protein localization to plasma membrane"/>
    <property type="evidence" value="ECO:0000250"/>
    <property type="project" value="UniProtKB"/>
</dbReference>
<dbReference type="GO" id="GO:0006508">
    <property type="term" value="P:proteolysis"/>
    <property type="evidence" value="ECO:0007669"/>
    <property type="project" value="InterPro"/>
</dbReference>
<dbReference type="GO" id="GO:1901379">
    <property type="term" value="P:regulation of potassium ion transmembrane transport"/>
    <property type="evidence" value="ECO:0000250"/>
    <property type="project" value="UniProtKB"/>
</dbReference>
<dbReference type="FunFam" id="2.140.10.30:FF:000001">
    <property type="entry name" value="Dipeptidyl peptidase 4"/>
    <property type="match status" value="1"/>
</dbReference>
<dbReference type="FunFam" id="3.40.50.1820:FF:000003">
    <property type="entry name" value="Dipeptidyl peptidase 4"/>
    <property type="match status" value="1"/>
</dbReference>
<dbReference type="Gene3D" id="3.40.50.1820">
    <property type="entry name" value="alpha/beta hydrolase"/>
    <property type="match status" value="1"/>
</dbReference>
<dbReference type="Gene3D" id="2.140.10.30">
    <property type="entry name" value="Dipeptidylpeptidase IV, N-terminal domain"/>
    <property type="match status" value="1"/>
</dbReference>
<dbReference type="InterPro" id="IPR029058">
    <property type="entry name" value="AB_hydrolase_fold"/>
</dbReference>
<dbReference type="InterPro" id="IPR001375">
    <property type="entry name" value="Peptidase_S9_cat"/>
</dbReference>
<dbReference type="InterPro" id="IPR002469">
    <property type="entry name" value="Peptidase_S9B_N"/>
</dbReference>
<dbReference type="InterPro" id="IPR050278">
    <property type="entry name" value="Serine_Prot_S9B/DPPIV"/>
</dbReference>
<dbReference type="PANTHER" id="PTHR11731:SF20">
    <property type="entry name" value="DIPEPTIDYL AMINOPEPTIDASE-LIKE PROTEIN 6"/>
    <property type="match status" value="1"/>
</dbReference>
<dbReference type="PANTHER" id="PTHR11731">
    <property type="entry name" value="PROTEASE FAMILY S9B,C DIPEPTIDYL-PEPTIDASE IV-RELATED"/>
    <property type="match status" value="1"/>
</dbReference>
<dbReference type="Pfam" id="PF00930">
    <property type="entry name" value="DPPIV_N"/>
    <property type="match status" value="1"/>
</dbReference>
<dbReference type="Pfam" id="PF00326">
    <property type="entry name" value="Peptidase_S9"/>
    <property type="match status" value="1"/>
</dbReference>
<dbReference type="SUPFAM" id="SSF53474">
    <property type="entry name" value="alpha/beta-Hydrolases"/>
    <property type="match status" value="1"/>
</dbReference>
<dbReference type="SUPFAM" id="SSF82171">
    <property type="entry name" value="DPP6 N-terminal domain-like"/>
    <property type="match status" value="1"/>
</dbReference>
<sequence length="863" mass="96557">MASLYQRFTGKINTSRSFPAPPEASRLLGGQGPEEDGAGPKPLGAQAPAAAPRERGGGGGAGGRPRFQYQARSDCDDEDELVGSNPPQRNWKGIAIALLVILVICSLIVTSVILLTPAEDNSLSQKKKVTVEDLFSEDFKIHDPEAKWISDKEFIYREQKGSVILRNVETNTSTVLIEGKKIESLRAIRYEISPDREYALFSYNVEPIYQHSYTGYYVLSKIPHGDPQSLDPPEVSNAKLQYAGWGPKGQQLIFIFENNIYYCAHVGKQAIRVVSTGKEGVIYNGLSDWLYEEEILKTHIAHWWSPDGTRLAYATINDSRVPVMELPTYTGSVYPTAKPYHYPKAGCENPSISLHVIGLNGPTHDLEMTPPDDPRMREYYITMVKWATSTKVAVNWLSRAQNVSILTLCDATTGVCTKKHEDESEAWLHRQNEEPVFSKDGRKFFFVRAIPQGGQGKFYHITVSSSQPNSSNDNIQSITSGDWDVTKILSYDEKRSQIYFLSTEDLPRRRQLYSASTVGSFNRQCLSCDLVDNCTYFSASFSPGADFFLLKCEGPGVPTVSVHNTTDKKKMFDLETNEHVQKAISDRQMPKVEYRKIETDDYNLPIQILKPATFTDTAHYPLLLVVDGTPGSQSVAEKFAVTWETVMVSSHGAVVVKCDGRGSGFQGTRLLHEVRRRLGSLEEKDQMEAVRVMLKEPYIDKTRVAVFGKDYGGYLSTYLLPAKGDGQAPVFSCGSALSPITDFKLYASAFSERYLGLHGLDNRAYEMAKVAHRVSALEGQQFLVIHATADEKIHFQHTAELITQLIKGKANYSLQIYPDESHYFSSAALQQHLHRSILGFFVECFRIQDKLPAVTAREDEEED</sequence>
<proteinExistence type="evidence at protein level"/>